<keyword id="KW-0880">Kelch repeat</keyword>
<keyword id="KW-1267">Proteomics identification</keyword>
<keyword id="KW-1185">Reference proteome</keyword>
<keyword id="KW-0677">Repeat</keyword>
<organism>
    <name type="scientific">Homo sapiens</name>
    <name type="common">Human</name>
    <dbReference type="NCBI Taxonomy" id="9606"/>
    <lineage>
        <taxon>Eukaryota</taxon>
        <taxon>Metazoa</taxon>
        <taxon>Chordata</taxon>
        <taxon>Craniata</taxon>
        <taxon>Vertebrata</taxon>
        <taxon>Euteleostomi</taxon>
        <taxon>Mammalia</taxon>
        <taxon>Eutheria</taxon>
        <taxon>Euarchontoglires</taxon>
        <taxon>Primates</taxon>
        <taxon>Haplorrhini</taxon>
        <taxon>Catarrhini</taxon>
        <taxon>Hominidae</taxon>
        <taxon>Homo</taxon>
    </lineage>
</organism>
<dbReference type="EMBL" id="AL355075">
    <property type="status" value="NOT_ANNOTATED_CDS"/>
    <property type="molecule type" value="Genomic_DNA"/>
</dbReference>
<dbReference type="CCDS" id="CCDS53882.1"/>
<dbReference type="RefSeq" id="NP_001103467.2">
    <property type="nucleotide sequence ID" value="NM_001109997.3"/>
</dbReference>
<dbReference type="SMR" id="A6NCF5"/>
<dbReference type="BioGRID" id="125816">
    <property type="interactions" value="29"/>
</dbReference>
<dbReference type="FunCoup" id="A6NCF5">
    <property type="interactions" value="12"/>
</dbReference>
<dbReference type="IntAct" id="A6NCF5">
    <property type="interactions" value="26"/>
</dbReference>
<dbReference type="STRING" id="9606.ENSP00000341549"/>
<dbReference type="iPTMnet" id="A6NCF5"/>
<dbReference type="PhosphoSitePlus" id="A6NCF5"/>
<dbReference type="BioMuta" id="KLHL33"/>
<dbReference type="MassIVE" id="A6NCF5"/>
<dbReference type="PaxDb" id="9606-ENSP00000341549"/>
<dbReference type="PeptideAtlas" id="A6NCF5"/>
<dbReference type="Antibodypedia" id="70728">
    <property type="antibodies" value="28 antibodies from 10 providers"/>
</dbReference>
<dbReference type="DNASU" id="123103"/>
<dbReference type="Ensembl" id="ENST00000344581.4">
    <property type="protein sequence ID" value="ENSP00000341549.4"/>
    <property type="gene ID" value="ENSG00000185271.9"/>
</dbReference>
<dbReference type="Ensembl" id="ENST00000708773.1">
    <property type="protein sequence ID" value="ENSP00000517335.1"/>
    <property type="gene ID" value="ENSG00000291793.1"/>
</dbReference>
<dbReference type="GeneID" id="123103"/>
<dbReference type="KEGG" id="hsa:123103"/>
<dbReference type="UCSC" id="uc010tli.2">
    <property type="organism name" value="human"/>
</dbReference>
<dbReference type="AGR" id="HGNC:31952"/>
<dbReference type="CTD" id="123103"/>
<dbReference type="DisGeNET" id="123103"/>
<dbReference type="GeneCards" id="KLHL33"/>
<dbReference type="HGNC" id="HGNC:31952">
    <property type="gene designation" value="KLHL33"/>
</dbReference>
<dbReference type="HPA" id="ENSG00000185271">
    <property type="expression patterns" value="Group enriched (skeletal muscle, tongue)"/>
</dbReference>
<dbReference type="neXtProt" id="NX_A6NCF5"/>
<dbReference type="PharmGKB" id="PA162393579"/>
<dbReference type="VEuPathDB" id="HostDB:ENSG00000185271"/>
<dbReference type="eggNOG" id="KOG1072">
    <property type="taxonomic scope" value="Eukaryota"/>
</dbReference>
<dbReference type="GeneTree" id="ENSGT00940000156265"/>
<dbReference type="HOGENOM" id="CLU_004253_14_2_1"/>
<dbReference type="InParanoid" id="A6NCF5"/>
<dbReference type="OMA" id="QDTHLIH"/>
<dbReference type="OrthoDB" id="45365at2759"/>
<dbReference type="PAN-GO" id="A6NCF5">
    <property type="GO annotations" value="0 GO annotations based on evolutionary models"/>
</dbReference>
<dbReference type="PhylomeDB" id="A6NCF5"/>
<dbReference type="TreeFam" id="TF328485"/>
<dbReference type="PathwayCommons" id="A6NCF5"/>
<dbReference type="SignaLink" id="A6NCF5"/>
<dbReference type="BioGRID-ORCS" id="123103">
    <property type="hits" value="9 hits in 1178 CRISPR screens"/>
</dbReference>
<dbReference type="ChiTaRS" id="KLHL33">
    <property type="organism name" value="human"/>
</dbReference>
<dbReference type="GenomeRNAi" id="123103"/>
<dbReference type="Pharos" id="A6NCF5">
    <property type="development level" value="Tdark"/>
</dbReference>
<dbReference type="PRO" id="PR:A6NCF5"/>
<dbReference type="Proteomes" id="UP000005640">
    <property type="component" value="Chromosome 14"/>
</dbReference>
<dbReference type="RNAct" id="A6NCF5">
    <property type="molecule type" value="protein"/>
</dbReference>
<dbReference type="Bgee" id="ENSG00000185271">
    <property type="expression patterns" value="Expressed in skeletal muscle tissue and 88 other cell types or tissues"/>
</dbReference>
<dbReference type="ExpressionAtlas" id="A6NCF5">
    <property type="expression patterns" value="baseline and differential"/>
</dbReference>
<dbReference type="CDD" id="cd18472">
    <property type="entry name" value="BACK_KLHL33"/>
    <property type="match status" value="1"/>
</dbReference>
<dbReference type="Gene3D" id="1.25.40.420">
    <property type="match status" value="1"/>
</dbReference>
<dbReference type="Gene3D" id="2.120.10.80">
    <property type="entry name" value="Kelch-type beta propeller"/>
    <property type="match status" value="1"/>
</dbReference>
<dbReference type="Gene3D" id="3.30.710.10">
    <property type="entry name" value="Potassium Channel Kv1.1, Chain A"/>
    <property type="match status" value="1"/>
</dbReference>
<dbReference type="InterPro" id="IPR011705">
    <property type="entry name" value="BACK"/>
</dbReference>
<dbReference type="InterPro" id="IPR017096">
    <property type="entry name" value="BTB-kelch_protein"/>
</dbReference>
<dbReference type="InterPro" id="IPR015915">
    <property type="entry name" value="Kelch-typ_b-propeller"/>
</dbReference>
<dbReference type="InterPro" id="IPR006652">
    <property type="entry name" value="Kelch_1"/>
</dbReference>
<dbReference type="InterPro" id="IPR030609">
    <property type="entry name" value="KLHL33_BACK"/>
</dbReference>
<dbReference type="InterPro" id="IPR011333">
    <property type="entry name" value="SKP1/BTB/POZ_sf"/>
</dbReference>
<dbReference type="PANTHER" id="PTHR45632:SF14">
    <property type="entry name" value="KELCH-LIKE PROTEIN 33"/>
    <property type="match status" value="1"/>
</dbReference>
<dbReference type="PANTHER" id="PTHR45632">
    <property type="entry name" value="LD33804P"/>
    <property type="match status" value="1"/>
</dbReference>
<dbReference type="Pfam" id="PF07707">
    <property type="entry name" value="BACK"/>
    <property type="match status" value="1"/>
</dbReference>
<dbReference type="Pfam" id="PF21536">
    <property type="entry name" value="BTB_KLHL33"/>
    <property type="match status" value="1"/>
</dbReference>
<dbReference type="Pfam" id="PF01344">
    <property type="entry name" value="Kelch_1"/>
    <property type="match status" value="1"/>
</dbReference>
<dbReference type="Pfam" id="PF24681">
    <property type="entry name" value="Kelch_KLHDC2_KLHL20_DRC7"/>
    <property type="match status" value="1"/>
</dbReference>
<dbReference type="PIRSF" id="PIRSF037037">
    <property type="entry name" value="Kelch-like_protein_gigaxonin"/>
    <property type="match status" value="1"/>
</dbReference>
<dbReference type="SMART" id="SM00875">
    <property type="entry name" value="BACK"/>
    <property type="match status" value="1"/>
</dbReference>
<dbReference type="SMART" id="SM00612">
    <property type="entry name" value="Kelch"/>
    <property type="match status" value="5"/>
</dbReference>
<dbReference type="SUPFAM" id="SSF117281">
    <property type="entry name" value="Kelch motif"/>
    <property type="match status" value="1"/>
</dbReference>
<dbReference type="SUPFAM" id="SSF54695">
    <property type="entry name" value="POZ domain"/>
    <property type="match status" value="1"/>
</dbReference>
<proteinExistence type="evidence at protein level"/>
<accession>A6NCF5</accession>
<name>KLH33_HUMAN</name>
<feature type="chain" id="PRO_0000324769" description="Kelch-like protein 33">
    <location>
        <begin position="1"/>
        <end position="533"/>
    </location>
</feature>
<feature type="repeat" description="Kelch 1">
    <location>
        <begin position="210"/>
        <end position="258"/>
    </location>
</feature>
<feature type="repeat" description="Kelch 2">
    <location>
        <begin position="273"/>
        <end position="322"/>
    </location>
</feature>
<feature type="repeat" description="Kelch 3">
    <location>
        <begin position="323"/>
        <end position="369"/>
    </location>
</feature>
<feature type="repeat" description="Kelch 4">
    <location>
        <begin position="371"/>
        <end position="418"/>
    </location>
</feature>
<feature type="repeat" description="Kelch 5">
    <location>
        <begin position="419"/>
        <end position="465"/>
    </location>
</feature>
<feature type="repeat" description="Kelch 6">
    <location>
        <begin position="467"/>
        <end position="514"/>
    </location>
</feature>
<feature type="sequence variant" id="VAR_039878" description="In dbSNP:rs12587478.">
    <original>R</original>
    <variation>H</variation>
    <location>
        <position position="163"/>
    </location>
</feature>
<feature type="sequence variant" id="VAR_039879" description="In dbSNP:rs17242648.">
    <original>R</original>
    <variation>Q</variation>
    <location>
        <position position="176"/>
    </location>
</feature>
<feature type="sequence variant" id="VAR_039880" description="In dbSNP:rs1953225.">
    <original>E</original>
    <variation>G</variation>
    <location>
        <position position="345"/>
    </location>
</feature>
<feature type="sequence variant" id="VAR_039881" description="In dbSNP:rs7145318.">
    <original>A</original>
    <variation>T</variation>
    <location>
        <position position="516"/>
    </location>
</feature>
<protein>
    <recommendedName>
        <fullName>Kelch-like protein 33</fullName>
    </recommendedName>
</protein>
<gene>
    <name type="primary">KLHL33</name>
</gene>
<reference key="1">
    <citation type="journal article" date="2003" name="Nature">
        <title>The DNA sequence and analysis of human chromosome 14.</title>
        <authorList>
            <person name="Heilig R."/>
            <person name="Eckenberg R."/>
            <person name="Petit J.-L."/>
            <person name="Fonknechten N."/>
            <person name="Da Silva C."/>
            <person name="Cattolico L."/>
            <person name="Levy M."/>
            <person name="Barbe V."/>
            <person name="De Berardinis V."/>
            <person name="Ureta-Vidal A."/>
            <person name="Pelletier E."/>
            <person name="Vico V."/>
            <person name="Anthouard V."/>
            <person name="Rowen L."/>
            <person name="Madan A."/>
            <person name="Qin S."/>
            <person name="Sun H."/>
            <person name="Du H."/>
            <person name="Pepin K."/>
            <person name="Artiguenave F."/>
            <person name="Robert C."/>
            <person name="Cruaud C."/>
            <person name="Bruels T."/>
            <person name="Jaillon O."/>
            <person name="Friedlander L."/>
            <person name="Samson G."/>
            <person name="Brottier P."/>
            <person name="Cure S."/>
            <person name="Segurens B."/>
            <person name="Aniere F."/>
            <person name="Samain S."/>
            <person name="Crespeau H."/>
            <person name="Abbasi N."/>
            <person name="Aiach N."/>
            <person name="Boscus D."/>
            <person name="Dickhoff R."/>
            <person name="Dors M."/>
            <person name="Dubois I."/>
            <person name="Friedman C."/>
            <person name="Gouyvenoux M."/>
            <person name="James R."/>
            <person name="Madan A."/>
            <person name="Mairey-Estrada B."/>
            <person name="Mangenot S."/>
            <person name="Martins N."/>
            <person name="Menard M."/>
            <person name="Oztas S."/>
            <person name="Ratcliffe A."/>
            <person name="Shaffer T."/>
            <person name="Trask B."/>
            <person name="Vacherie B."/>
            <person name="Bellemere C."/>
            <person name="Belser C."/>
            <person name="Besnard-Gonnet M."/>
            <person name="Bartol-Mavel D."/>
            <person name="Boutard M."/>
            <person name="Briez-Silla S."/>
            <person name="Combette S."/>
            <person name="Dufosse-Laurent V."/>
            <person name="Ferron C."/>
            <person name="Lechaplais C."/>
            <person name="Louesse C."/>
            <person name="Muselet D."/>
            <person name="Magdelenat G."/>
            <person name="Pateau E."/>
            <person name="Petit E."/>
            <person name="Sirvain-Trukniewicz P."/>
            <person name="Trybou A."/>
            <person name="Vega-Czarny N."/>
            <person name="Bataille E."/>
            <person name="Bluet E."/>
            <person name="Bordelais I."/>
            <person name="Dubois M."/>
            <person name="Dumont C."/>
            <person name="Guerin T."/>
            <person name="Haffray S."/>
            <person name="Hammadi R."/>
            <person name="Muanga J."/>
            <person name="Pellouin V."/>
            <person name="Robert D."/>
            <person name="Wunderle E."/>
            <person name="Gauguet G."/>
            <person name="Roy A."/>
            <person name="Sainte-Marthe L."/>
            <person name="Verdier J."/>
            <person name="Verdier-Discala C."/>
            <person name="Hillier L.W."/>
            <person name="Fulton L."/>
            <person name="McPherson J."/>
            <person name="Matsuda F."/>
            <person name="Wilson R."/>
            <person name="Scarpelli C."/>
            <person name="Gyapay G."/>
            <person name="Wincker P."/>
            <person name="Saurin W."/>
            <person name="Quetier F."/>
            <person name="Waterston R."/>
            <person name="Hood L."/>
            <person name="Weissenbach J."/>
        </authorList>
    </citation>
    <scope>NUCLEOTIDE SEQUENCE [LARGE SCALE GENOMIC DNA]</scope>
</reference>
<sequence>MLLSGMRESQGTEVSLRTISTQDLRLLVSFAYSGVVRARWPGLLRAAQAALQYQSSSCLDLCQKGLARGLSPARCLALFPMAEAPGLERLWSKARHYLLTHLPAVALCPAFPSLPAACLAELLDSDELHVQEEFEAFVAARCWLAANPETQESEAKALLRCVRFGRMSTRELRRVRAAGLLPPLTPDLLHQLMVEADVPGQERRREPDRALVVIGGDGLRPDMALRQPSRAVWWARAFRCGVGLVRTVEWGQLPALPAPGRFRHGAASLAGSELYVCGGQDFYSHSNTLASTLRWEPSQEDWEEMAPLSQARSLFSLVALDGKLYALGGRHNDVALDSVETYNPELNVWRPAPALPAPCFAHAAAILEGQLYVSGGCGGTGQYLASLMHYDPKLEKPGTFLSPMGVPRAGHVMAALGGRLYVAGGLGETEDLLSFEAYELRTDSWTHLAPLPSPHVGAASAVLQGELLVLGGYSHRTYALSHLIHAYCPGLGRWLCLGTLPRPRAEMPACILTLPAVQHIALVPTPHQTKPAG</sequence>